<evidence type="ECO:0000255" key="1">
    <source>
        <dbReference type="HAMAP-Rule" id="MF_00214"/>
    </source>
</evidence>
<proteinExistence type="inferred from homology"/>
<gene>
    <name evidence="1" type="primary">aroD</name>
    <name type="ordered locus">SpyM3_0543</name>
</gene>
<dbReference type="EC" id="4.2.1.10" evidence="1"/>
<dbReference type="EMBL" id="AE014074">
    <property type="protein sequence ID" value="AAM79150.1"/>
    <property type="molecule type" value="Genomic_DNA"/>
</dbReference>
<dbReference type="RefSeq" id="WP_002985140.1">
    <property type="nucleotide sequence ID" value="NC_004070.1"/>
</dbReference>
<dbReference type="SMR" id="P0CZ74"/>
<dbReference type="GeneID" id="69901072"/>
<dbReference type="KEGG" id="spg:SpyM3_0543"/>
<dbReference type="HOGENOM" id="CLU_064444_0_0_9"/>
<dbReference type="UniPathway" id="UPA00053">
    <property type="reaction ID" value="UER00086"/>
</dbReference>
<dbReference type="Proteomes" id="UP000000564">
    <property type="component" value="Chromosome"/>
</dbReference>
<dbReference type="GO" id="GO:0003855">
    <property type="term" value="F:3-dehydroquinate dehydratase activity"/>
    <property type="evidence" value="ECO:0007669"/>
    <property type="project" value="UniProtKB-UniRule"/>
</dbReference>
<dbReference type="GO" id="GO:0046279">
    <property type="term" value="P:3,4-dihydroxybenzoate biosynthetic process"/>
    <property type="evidence" value="ECO:0007669"/>
    <property type="project" value="UniProtKB-ARBA"/>
</dbReference>
<dbReference type="GO" id="GO:0008652">
    <property type="term" value="P:amino acid biosynthetic process"/>
    <property type="evidence" value="ECO:0007669"/>
    <property type="project" value="UniProtKB-KW"/>
</dbReference>
<dbReference type="GO" id="GO:0009073">
    <property type="term" value="P:aromatic amino acid family biosynthetic process"/>
    <property type="evidence" value="ECO:0007669"/>
    <property type="project" value="UniProtKB-KW"/>
</dbReference>
<dbReference type="GO" id="GO:0009423">
    <property type="term" value="P:chorismate biosynthetic process"/>
    <property type="evidence" value="ECO:0007669"/>
    <property type="project" value="UniProtKB-UniRule"/>
</dbReference>
<dbReference type="CDD" id="cd00502">
    <property type="entry name" value="DHQase_I"/>
    <property type="match status" value="1"/>
</dbReference>
<dbReference type="Gene3D" id="3.20.20.70">
    <property type="entry name" value="Aldolase class I"/>
    <property type="match status" value="1"/>
</dbReference>
<dbReference type="HAMAP" id="MF_00214">
    <property type="entry name" value="AroD"/>
    <property type="match status" value="1"/>
</dbReference>
<dbReference type="InterPro" id="IPR013785">
    <property type="entry name" value="Aldolase_TIM"/>
</dbReference>
<dbReference type="InterPro" id="IPR001381">
    <property type="entry name" value="DHquinase_I"/>
</dbReference>
<dbReference type="InterPro" id="IPR050146">
    <property type="entry name" value="Type-I_3-dehydroquinase"/>
</dbReference>
<dbReference type="NCBIfam" id="TIGR01093">
    <property type="entry name" value="aroD"/>
    <property type="match status" value="1"/>
</dbReference>
<dbReference type="PANTHER" id="PTHR43699">
    <property type="entry name" value="3-DEHYDROQUINATE DEHYDRATASE"/>
    <property type="match status" value="1"/>
</dbReference>
<dbReference type="PANTHER" id="PTHR43699:SF1">
    <property type="entry name" value="3-DEHYDROQUINATE DEHYDRATASE"/>
    <property type="match status" value="1"/>
</dbReference>
<dbReference type="Pfam" id="PF01487">
    <property type="entry name" value="DHquinase_I"/>
    <property type="match status" value="1"/>
</dbReference>
<dbReference type="SUPFAM" id="SSF51569">
    <property type="entry name" value="Aldolase"/>
    <property type="match status" value="1"/>
</dbReference>
<reference key="1">
    <citation type="journal article" date="2002" name="Proc. Natl. Acad. Sci. U.S.A.">
        <title>Genome sequence of a serotype M3 strain of group A Streptococcus: phage-encoded toxins, the high-virulence phenotype, and clone emergence.</title>
        <authorList>
            <person name="Beres S.B."/>
            <person name="Sylva G.L."/>
            <person name="Barbian K.D."/>
            <person name="Lei B."/>
            <person name="Hoff J.S."/>
            <person name="Mammarella N.D."/>
            <person name="Liu M.-Y."/>
            <person name="Smoot J.C."/>
            <person name="Porcella S.F."/>
            <person name="Parkins L.D."/>
            <person name="Campbell D.S."/>
            <person name="Smith T.M."/>
            <person name="McCormick J.K."/>
            <person name="Leung D.Y.M."/>
            <person name="Schlievert P.M."/>
            <person name="Musser J.M."/>
        </authorList>
    </citation>
    <scope>NUCLEOTIDE SEQUENCE [LARGE SCALE GENOMIC DNA]</scope>
    <source>
        <strain>ATCC BAA-595 / MGAS315</strain>
    </source>
</reference>
<organism>
    <name type="scientific">Streptococcus pyogenes serotype M3 (strain ATCC BAA-595 / MGAS315)</name>
    <dbReference type="NCBI Taxonomy" id="198466"/>
    <lineage>
        <taxon>Bacteria</taxon>
        <taxon>Bacillati</taxon>
        <taxon>Bacillota</taxon>
        <taxon>Bacilli</taxon>
        <taxon>Lactobacillales</taxon>
        <taxon>Streptococcaceae</taxon>
        <taxon>Streptococcus</taxon>
    </lineage>
</organism>
<sequence length="228" mass="26101">MRIVAPVMPRHFDEAQAIDISKYEDVNLIEWRADFLPKDEIVAVAPAIFEKFAGKEIIFTLRTVQEGGNITLSSQEYVDIIKEINAIYNPDYIDFEYFTHKSVFQEMLDFPNLILSYHNFEETPENLMEAFSEMTKLAPRVVKIAVMPQSEQDVLDLMNYTRGFKTLNPEQEFATISMGKLGRLSRFAGDVIGSSWTYVSLDHVSGPGQVTLNDMKRIIEVLEMDISN</sequence>
<feature type="chain" id="PRO_0000138819" description="3-dehydroquinate dehydratase">
    <location>
        <begin position="1"/>
        <end position="228"/>
    </location>
</feature>
<feature type="active site" description="Proton donor/acceptor" evidence="1">
    <location>
        <position position="118"/>
    </location>
</feature>
<feature type="active site" description="Schiff-base intermediate with substrate" evidence="1">
    <location>
        <position position="143"/>
    </location>
</feature>
<feature type="binding site" evidence="1">
    <location>
        <begin position="30"/>
        <end position="32"/>
    </location>
    <ligand>
        <name>3-dehydroquinate</name>
        <dbReference type="ChEBI" id="CHEBI:32364"/>
    </ligand>
</feature>
<feature type="binding site" evidence="1">
    <location>
        <position position="62"/>
    </location>
    <ligand>
        <name>3-dehydroquinate</name>
        <dbReference type="ChEBI" id="CHEBI:32364"/>
    </ligand>
</feature>
<feature type="binding site" evidence="1">
    <location>
        <position position="186"/>
    </location>
    <ligand>
        <name>3-dehydroquinate</name>
        <dbReference type="ChEBI" id="CHEBI:32364"/>
    </ligand>
</feature>
<feature type="binding site" evidence="1">
    <location>
        <position position="205"/>
    </location>
    <ligand>
        <name>3-dehydroquinate</name>
        <dbReference type="ChEBI" id="CHEBI:32364"/>
    </ligand>
</feature>
<feature type="binding site" evidence="1">
    <location>
        <position position="209"/>
    </location>
    <ligand>
        <name>3-dehydroquinate</name>
        <dbReference type="ChEBI" id="CHEBI:32364"/>
    </ligand>
</feature>
<keyword id="KW-0028">Amino-acid biosynthesis</keyword>
<keyword id="KW-0057">Aromatic amino acid biosynthesis</keyword>
<keyword id="KW-0456">Lyase</keyword>
<keyword id="KW-0704">Schiff base</keyword>
<name>AROD_STRP3</name>
<protein>
    <recommendedName>
        <fullName evidence="1">3-dehydroquinate dehydratase</fullName>
        <shortName evidence="1">3-dehydroquinase</shortName>
        <ecNumber evidence="1">4.2.1.10</ecNumber>
    </recommendedName>
    <alternativeName>
        <fullName evidence="1">Type I DHQase</fullName>
    </alternativeName>
    <alternativeName>
        <fullName evidence="1">Type I dehydroquinase</fullName>
        <shortName evidence="1">DHQ1</shortName>
    </alternativeName>
</protein>
<accession>P0CZ74</accession>
<accession>P63591</accession>
<accession>Q9A0E5</accession>
<comment type="function">
    <text evidence="1">Involved in the third step of the chorismate pathway, which leads to the biosynthesis of aromatic amino acids. Catalyzes the cis-dehydration of 3-dehydroquinate (DHQ) and introduces the first double bond of the aromatic ring to yield 3-dehydroshikimate.</text>
</comment>
<comment type="catalytic activity">
    <reaction evidence="1">
        <text>3-dehydroquinate = 3-dehydroshikimate + H2O</text>
        <dbReference type="Rhea" id="RHEA:21096"/>
        <dbReference type="ChEBI" id="CHEBI:15377"/>
        <dbReference type="ChEBI" id="CHEBI:16630"/>
        <dbReference type="ChEBI" id="CHEBI:32364"/>
        <dbReference type="EC" id="4.2.1.10"/>
    </reaction>
</comment>
<comment type="pathway">
    <text evidence="1">Metabolic intermediate biosynthesis; chorismate biosynthesis; chorismate from D-erythrose 4-phosphate and phosphoenolpyruvate: step 3/7.</text>
</comment>
<comment type="subunit">
    <text evidence="1">Homodimer.</text>
</comment>
<comment type="similarity">
    <text evidence="1">Belongs to the type-I 3-dehydroquinase family.</text>
</comment>